<sequence>MKILVIGAGPAGLVFASQLKQARPLWAIDIVEKNDEQEVLGWGVVLPGRPGQHPANPLSYLDAPERLNPQFLEDFKLVHHNEPSLMSTGVLLCGVERRGLVHALRDKCRSQGIAIRFESPLLEHGELPLADYDLVVLANGVNHKTAHFTEALVPQVDYGRNKYIWYGTSQLFDQMNLVFRTHGKDIFIAHAYKYSDTMSTFIVECSEETYARARLGEMSEEASAEYVAKVFQAELGGHGLVSQPGLGWRNFMTLSHDRCHDGKLVLLGDALQSGHFSIGHGTTMAVVVAQLLVKALCTEDGVPAALKRFEERALPLVQLFRGHADNSRVWFETVEERMHLSSAEFVQSFDARRKSLPPMPEALAQNLRYALQR</sequence>
<comment type="function">
    <text evidence="2 3">Catalyzes the oxygenation of the 6-position of protodeoxyviolaceinate to form proviolacein.</text>
</comment>
<comment type="catalytic activity">
    <reaction evidence="2 3">
        <text>protodeoxyviolaceinate + NADH + O2 + H(+) = protoviolaceinate + NAD(+) + H2O</text>
        <dbReference type="Rhea" id="RHEA:49372"/>
        <dbReference type="ChEBI" id="CHEBI:15377"/>
        <dbReference type="ChEBI" id="CHEBI:15378"/>
        <dbReference type="ChEBI" id="CHEBI:15379"/>
        <dbReference type="ChEBI" id="CHEBI:57540"/>
        <dbReference type="ChEBI" id="CHEBI:57945"/>
        <dbReference type="ChEBI" id="CHEBI:90898"/>
        <dbReference type="ChEBI" id="CHEBI:90907"/>
        <dbReference type="EC" id="1.14.13.217"/>
    </reaction>
</comment>
<comment type="catalytic activity">
    <reaction evidence="2 3">
        <text>protodeoxyviolaceinate + NADPH + O2 + H(+) = protoviolaceinate + NADP(+) + H2O</text>
        <dbReference type="Rhea" id="RHEA:49124"/>
        <dbReference type="ChEBI" id="CHEBI:15377"/>
        <dbReference type="ChEBI" id="CHEBI:15378"/>
        <dbReference type="ChEBI" id="CHEBI:15379"/>
        <dbReference type="ChEBI" id="CHEBI:57783"/>
        <dbReference type="ChEBI" id="CHEBI:58349"/>
        <dbReference type="ChEBI" id="CHEBI:90898"/>
        <dbReference type="ChEBI" id="CHEBI:90907"/>
        <dbReference type="EC" id="1.14.13.217"/>
    </reaction>
</comment>
<comment type="cofactor">
    <cofactor evidence="4">
        <name>FAD</name>
        <dbReference type="ChEBI" id="CHEBI:57692"/>
    </cofactor>
</comment>
<comment type="pathway">
    <text>Pigment biosynthesis; violacein biosynthesis.</text>
</comment>
<comment type="induction">
    <text>By N-acylhomoserine lactone (AHL).</text>
</comment>
<comment type="biotechnology">
    <text>Violacein production is used as a biosensor for the detection of quorum-sensing AHL production. Violacein possesses antibacterial, antiviral, antimicrobial, antileishmanial, trypanocidal and potential antitumoral activities.</text>
</comment>
<protein>
    <recommendedName>
        <fullName evidence="4">Protodeoxyviolaceinate monooxygenase</fullName>
        <ecNumber evidence="2 3">1.14.13.217</ecNumber>
    </recommendedName>
</protein>
<feature type="chain" id="PRO_0000065834" description="Protodeoxyviolaceinate monooxygenase">
    <location>
        <begin position="1"/>
        <end position="373"/>
    </location>
</feature>
<feature type="binding site" evidence="1">
    <location>
        <begin position="2"/>
        <end position="20"/>
    </location>
    <ligand>
        <name>FAD</name>
        <dbReference type="ChEBI" id="CHEBI:57692"/>
    </ligand>
</feature>
<feature type="sequence conflict" description="In Ref. 1; AAD51811." evidence="4" ref="1">
    <original>V</original>
    <variation>I</variation>
    <location>
        <position position="31"/>
    </location>
</feature>
<feature type="sequence conflict" description="In Ref. 1; AAD51811." evidence="4" ref="1">
    <original>V</original>
    <variation>A</variation>
    <location>
        <position position="153"/>
    </location>
</feature>
<feature type="strand" evidence="5">
    <location>
        <begin position="2"/>
        <end position="6"/>
    </location>
</feature>
<feature type="helix" evidence="5">
    <location>
        <begin position="10"/>
        <end position="22"/>
    </location>
</feature>
<feature type="strand" evidence="5">
    <location>
        <begin position="26"/>
        <end position="31"/>
    </location>
</feature>
<feature type="strand" evidence="5">
    <location>
        <begin position="42"/>
        <end position="48"/>
    </location>
</feature>
<feature type="turn" evidence="5">
    <location>
        <begin position="50"/>
        <end position="52"/>
    </location>
</feature>
<feature type="helix" evidence="5">
    <location>
        <begin position="57"/>
        <end position="60"/>
    </location>
</feature>
<feature type="helix" evidence="5">
    <location>
        <begin position="64"/>
        <end position="67"/>
    </location>
</feature>
<feature type="strand" evidence="5">
    <location>
        <begin position="70"/>
        <end position="72"/>
    </location>
</feature>
<feature type="strand" evidence="5">
    <location>
        <begin position="75"/>
        <end position="85"/>
    </location>
</feature>
<feature type="strand" evidence="5">
    <location>
        <begin position="92"/>
        <end position="96"/>
    </location>
</feature>
<feature type="helix" evidence="5">
    <location>
        <begin position="97"/>
        <end position="110"/>
    </location>
</feature>
<feature type="strand" evidence="5">
    <location>
        <begin position="114"/>
        <end position="116"/>
    </location>
</feature>
<feature type="helix" evidence="5">
    <location>
        <begin position="124"/>
        <end position="126"/>
    </location>
</feature>
<feature type="helix" evidence="5">
    <location>
        <begin position="129"/>
        <end position="131"/>
    </location>
</feature>
<feature type="strand" evidence="5">
    <location>
        <begin position="133"/>
        <end position="137"/>
    </location>
</feature>
<feature type="helix" evidence="5">
    <location>
        <begin position="140"/>
        <end position="144"/>
    </location>
</feature>
<feature type="helix" evidence="5">
    <location>
        <begin position="150"/>
        <end position="152"/>
    </location>
</feature>
<feature type="strand" evidence="5">
    <location>
        <begin position="157"/>
        <end position="170"/>
    </location>
</feature>
<feature type="strand" evidence="5">
    <location>
        <begin position="173"/>
        <end position="182"/>
    </location>
</feature>
<feature type="strand" evidence="5">
    <location>
        <begin position="185"/>
        <end position="193"/>
    </location>
</feature>
<feature type="strand" evidence="5">
    <location>
        <begin position="195"/>
        <end position="197"/>
    </location>
</feature>
<feature type="strand" evidence="5">
    <location>
        <begin position="199"/>
        <end position="205"/>
    </location>
</feature>
<feature type="helix" evidence="5">
    <location>
        <begin position="207"/>
        <end position="212"/>
    </location>
</feature>
<feature type="strand" evidence="5">
    <location>
        <begin position="215"/>
        <end position="218"/>
    </location>
</feature>
<feature type="helix" evidence="5">
    <location>
        <begin position="220"/>
        <end position="230"/>
    </location>
</feature>
<feature type="helix" evidence="5">
    <location>
        <begin position="232"/>
        <end position="235"/>
    </location>
</feature>
<feature type="turn" evidence="5">
    <location>
        <begin position="244"/>
        <end position="246"/>
    </location>
</feature>
<feature type="strand" evidence="5">
    <location>
        <begin position="248"/>
        <end position="253"/>
    </location>
</feature>
<feature type="strand" evidence="5">
    <location>
        <begin position="259"/>
        <end position="261"/>
    </location>
</feature>
<feature type="strand" evidence="5">
    <location>
        <begin position="264"/>
        <end position="266"/>
    </location>
</feature>
<feature type="helix" evidence="5">
    <location>
        <begin position="268"/>
        <end position="270"/>
    </location>
</feature>
<feature type="helix" evidence="5">
    <location>
        <begin position="276"/>
        <end position="278"/>
    </location>
</feature>
<feature type="helix" evidence="5">
    <location>
        <begin position="281"/>
        <end position="298"/>
    </location>
</feature>
<feature type="strand" evidence="5">
    <location>
        <begin position="299"/>
        <end position="301"/>
    </location>
</feature>
<feature type="helix" evidence="5">
    <location>
        <begin position="302"/>
        <end position="332"/>
    </location>
</feature>
<feature type="helix" evidence="5">
    <location>
        <begin position="345"/>
        <end position="348"/>
    </location>
</feature>
<feature type="helix" evidence="5">
    <location>
        <begin position="349"/>
        <end position="351"/>
    </location>
</feature>
<feature type="turn" evidence="5">
    <location>
        <begin position="352"/>
        <end position="355"/>
    </location>
</feature>
<feature type="helix" evidence="5">
    <location>
        <begin position="359"/>
        <end position="370"/>
    </location>
</feature>
<name>VIOD_CHRVO</name>
<evidence type="ECO:0000255" key="1"/>
<evidence type="ECO:0000269" key="2">
    <source>
    </source>
</evidence>
<evidence type="ECO:0000269" key="3">
    <source>
    </source>
</evidence>
<evidence type="ECO:0000305" key="4"/>
<evidence type="ECO:0007829" key="5">
    <source>
        <dbReference type="PDB" id="3C4A"/>
    </source>
</evidence>
<dbReference type="EC" id="1.14.13.217" evidence="2 3"/>
<dbReference type="EMBL" id="AF172851">
    <property type="protein sequence ID" value="AAD51811.1"/>
    <property type="molecule type" value="Genomic_DNA"/>
</dbReference>
<dbReference type="EMBL" id="AB032799">
    <property type="protein sequence ID" value="BAA84785.1"/>
    <property type="molecule type" value="Genomic_DNA"/>
</dbReference>
<dbReference type="EMBL" id="AE016825">
    <property type="protein sequence ID" value="AAQ60935.1"/>
    <property type="molecule type" value="Genomic_DNA"/>
</dbReference>
<dbReference type="RefSeq" id="WP_011136818.1">
    <property type="nucleotide sequence ID" value="NC_005085.1"/>
</dbReference>
<dbReference type="PDB" id="3C4A">
    <property type="method" value="X-ray"/>
    <property type="resolution" value="2.30 A"/>
    <property type="chains" value="A=1-373"/>
</dbReference>
<dbReference type="PDBsum" id="3C4A"/>
<dbReference type="SMR" id="Q9S3U8"/>
<dbReference type="STRING" id="243365.CV_3271"/>
<dbReference type="KEGG" id="cvi:CV_3271"/>
<dbReference type="eggNOG" id="COG0654">
    <property type="taxonomic scope" value="Bacteria"/>
</dbReference>
<dbReference type="HOGENOM" id="CLU_027335_1_0_4"/>
<dbReference type="OrthoDB" id="8985337at2"/>
<dbReference type="BioCyc" id="MetaCyc:MONOMER-17366"/>
<dbReference type="BRENDA" id="1.14.13.217">
    <property type="organism ID" value="1370"/>
</dbReference>
<dbReference type="UniPathway" id="UPA00309"/>
<dbReference type="EvolutionaryTrace" id="Q9S3U8"/>
<dbReference type="Proteomes" id="UP000001424">
    <property type="component" value="Chromosome"/>
</dbReference>
<dbReference type="GO" id="GO:0004497">
    <property type="term" value="F:monooxygenase activity"/>
    <property type="evidence" value="ECO:0007669"/>
    <property type="project" value="UniProtKB-KW"/>
</dbReference>
<dbReference type="GO" id="GO:0017000">
    <property type="term" value="P:antibiotic biosynthetic process"/>
    <property type="evidence" value="ECO:0007669"/>
    <property type="project" value="UniProtKB-KW"/>
</dbReference>
<dbReference type="Gene3D" id="3.30.9.20">
    <property type="match status" value="1"/>
</dbReference>
<dbReference type="Gene3D" id="3.50.50.60">
    <property type="entry name" value="FAD/NAD(P)-binding domain"/>
    <property type="match status" value="1"/>
</dbReference>
<dbReference type="InterPro" id="IPR036188">
    <property type="entry name" value="FAD/NAD-bd_sf"/>
</dbReference>
<dbReference type="InterPro" id="IPR050631">
    <property type="entry name" value="PheA/TfdB_FAD_monoxygenase"/>
</dbReference>
<dbReference type="PANTHER" id="PTHR43476">
    <property type="entry name" value="3-(3-HYDROXY-PHENYL)PROPIONATE/3-HYDROXYCINNAMIC ACID HYDROXYLASE"/>
    <property type="match status" value="1"/>
</dbReference>
<dbReference type="PANTHER" id="PTHR43476:SF4">
    <property type="entry name" value="BLR0106 PROTEIN"/>
    <property type="match status" value="1"/>
</dbReference>
<dbReference type="SUPFAM" id="SSF51905">
    <property type="entry name" value="FAD/NAD(P)-binding domain"/>
    <property type="match status" value="1"/>
</dbReference>
<organism>
    <name type="scientific">Chromobacterium violaceum (strain ATCC 12472 / DSM 30191 / JCM 1249 / CCUG 213 / NBRC 12614 / NCIMB 9131 / NCTC 9757 / MK)</name>
    <dbReference type="NCBI Taxonomy" id="243365"/>
    <lineage>
        <taxon>Bacteria</taxon>
        <taxon>Pseudomonadati</taxon>
        <taxon>Pseudomonadota</taxon>
        <taxon>Betaproteobacteria</taxon>
        <taxon>Neisseriales</taxon>
        <taxon>Chromobacteriaceae</taxon>
        <taxon>Chromobacterium</taxon>
    </lineage>
</organism>
<gene>
    <name type="primary">vioD</name>
    <name type="ordered locus">CV_3271</name>
</gene>
<accession>Q9S3U8</accession>
<accession>Q9S0N2</accession>
<keyword id="KW-0002">3D-structure</keyword>
<keyword id="KW-0045">Antibiotic biosynthesis</keyword>
<keyword id="KW-0274">FAD</keyword>
<keyword id="KW-0285">Flavoprotein</keyword>
<keyword id="KW-0503">Monooxygenase</keyword>
<keyword id="KW-0520">NAD</keyword>
<keyword id="KW-0521">NADP</keyword>
<keyword id="KW-0560">Oxidoreductase</keyword>
<keyword id="KW-1185">Reference proteome</keyword>
<proteinExistence type="evidence at protein level"/>
<reference key="1">
    <citation type="journal article" date="2000" name="J. Mol. Microbiol. Biotechnol.">
        <title>Sequence analysis and functional characterization of the violacein biosynthetic pathway from Chromobacterium violaceum.</title>
        <authorList>
            <person name="August P.R."/>
            <person name="Grossman T.H."/>
            <person name="Minor C."/>
            <person name="Draper M.P."/>
            <person name="MacNeil I.A."/>
            <person name="Pemberton J.M."/>
            <person name="Call K.M."/>
            <person name="Holt D."/>
            <person name="Osburne M.S."/>
        </authorList>
    </citation>
    <scope>NUCLEOTIDE SEQUENCE [GENOMIC DNA]</scope>
    <source>
        <strain>UQM51</strain>
    </source>
</reference>
<reference key="2">
    <citation type="submission" date="1999-09" db="EMBL/GenBank/DDBJ databases">
        <title>Biosynthetic gene cluster for violacein pigment.</title>
        <authorList>
            <person name="Hoshino T."/>
        </authorList>
    </citation>
    <scope>NUCLEOTIDE SEQUENCE [GENOMIC DNA]</scope>
    <source>
        <strain>ATCC 12472 / DSM 30191 / JCM 1249 / CCUG 213 / NBRC 12614 / NCIMB 9131 / NCTC 9757 / MK</strain>
    </source>
</reference>
<reference key="3">
    <citation type="journal article" date="2003" name="Proc. Natl. Acad. Sci. U.S.A.">
        <title>The complete genome sequence of Chromobacterium violaceum reveals remarkable and exploitable bacterial adaptability.</title>
        <authorList>
            <person name="Vasconcelos A.T.R."/>
            <person name="de Almeida D.F."/>
            <person name="Hungria M."/>
            <person name="Guimaraes C.T."/>
            <person name="Antonio R.V."/>
            <person name="Almeida F.C."/>
            <person name="de Almeida L.G.P."/>
            <person name="de Almeida R."/>
            <person name="Alves-Gomes J.A."/>
            <person name="Andrade E.M."/>
            <person name="Araripe J."/>
            <person name="de Araujo M.F.F."/>
            <person name="Astolfi-Filho S."/>
            <person name="Azevedo V."/>
            <person name="Baptista A.J."/>
            <person name="Bataus L.A.M."/>
            <person name="Batista J.S."/>
            <person name="Belo A."/>
            <person name="van den Berg C."/>
            <person name="Bogo M."/>
            <person name="Bonatto S."/>
            <person name="Bordignon J."/>
            <person name="Brigido M.M."/>
            <person name="Brito C.A."/>
            <person name="Brocchi M."/>
            <person name="Burity H.A."/>
            <person name="Camargo A.A."/>
            <person name="Cardoso D.D.P."/>
            <person name="Carneiro N.P."/>
            <person name="Carraro D.M."/>
            <person name="Carvalho C.M.B."/>
            <person name="Cascardo J.C.M."/>
            <person name="Cavada B.S."/>
            <person name="Chueire L.M.O."/>
            <person name="Creczynski-Pasa T.B."/>
            <person name="Cunha-Junior N.C."/>
            <person name="Fagundes N."/>
            <person name="Falcao C.L."/>
            <person name="Fantinatti F."/>
            <person name="Farias I.P."/>
            <person name="Felipe M.S.S."/>
            <person name="Ferrari L.P."/>
            <person name="Ferro J.A."/>
            <person name="Ferro M.I.T."/>
            <person name="Franco G.R."/>
            <person name="Freitas N.S.A."/>
            <person name="Furlan L.R."/>
            <person name="Gazzinelli R.T."/>
            <person name="Gomes E.A."/>
            <person name="Goncalves P.R."/>
            <person name="Grangeiro T.B."/>
            <person name="Grattapaglia D."/>
            <person name="Grisard E.C."/>
            <person name="Hanna E.S."/>
            <person name="Jardim S.N."/>
            <person name="Laurino J."/>
            <person name="Leoi L.C.T."/>
            <person name="Lima L.F.A."/>
            <person name="Loureiro M.F."/>
            <person name="Lyra M.C.C.P."/>
            <person name="Madeira H.M.F."/>
            <person name="Manfio G.P."/>
            <person name="Maranhao A.Q."/>
            <person name="Martins W.S."/>
            <person name="di Mauro S.M.Z."/>
            <person name="de Medeiros S.R.B."/>
            <person name="Meissner R.V."/>
            <person name="Moreira M.A.M."/>
            <person name="Nascimento F.F."/>
            <person name="Nicolas M.F."/>
            <person name="Oliveira J.G."/>
            <person name="Oliveira S.C."/>
            <person name="Paixao R.F.C."/>
            <person name="Parente J.A."/>
            <person name="Pedrosa F.O."/>
            <person name="Pena S.D.J."/>
            <person name="Pereira J.O."/>
            <person name="Pereira M."/>
            <person name="Pinto L.S.R.C."/>
            <person name="Pinto L.S."/>
            <person name="Porto J.I.R."/>
            <person name="Potrich D.P."/>
            <person name="Ramalho-Neto C.E."/>
            <person name="Reis A.M.M."/>
            <person name="Rigo L.U."/>
            <person name="Rondinelli E."/>
            <person name="Santos E.B.P."/>
            <person name="Santos F.R."/>
            <person name="Schneider M.P.C."/>
            <person name="Seuanez H.N."/>
            <person name="Silva A.M.R."/>
            <person name="da Silva A.L.C."/>
            <person name="Silva D.W."/>
            <person name="Silva R."/>
            <person name="Simoes I.C."/>
            <person name="Simon D."/>
            <person name="Soares C.M.A."/>
            <person name="Soares R.B.A."/>
            <person name="Souza E.M."/>
            <person name="Souza K.R.L."/>
            <person name="Souza R.C."/>
            <person name="Steffens M.B.R."/>
            <person name="Steindel M."/>
            <person name="Teixeira S.R."/>
            <person name="Urmenyi T."/>
            <person name="Vettore A."/>
            <person name="Wassem R."/>
            <person name="Zaha A."/>
            <person name="Simpson A.J.G."/>
        </authorList>
    </citation>
    <scope>NUCLEOTIDE SEQUENCE [LARGE SCALE GENOMIC DNA]</scope>
    <source>
        <strain>ATCC 12472 / DSM 30191 / JCM 1249 / CCUG 213 / NBRC 12614 / NCIMB 9131 / NCTC 9757 / MK</strain>
    </source>
</reference>
<reference key="4">
    <citation type="journal article" date="2006" name="Biochemistry">
        <title>In vitro biosynthesis of violacein from L-tryptophan by the enzymes VioA-E from Chromobacterium violaceum.</title>
        <authorList>
            <person name="Balibar C.J."/>
            <person name="Walsh C.T."/>
        </authorList>
    </citation>
    <scope>FUNCTION</scope>
    <scope>CATALYTIC ACTIVITY</scope>
    <source>
        <strain>ATCC 12472 / DSM 30191 / JCM 1249 / CCUG 213 / NBRC 12614 / NCIMB 9131 / NCTC 9757 / MK</strain>
    </source>
</reference>
<reference key="5">
    <citation type="journal article" date="2007" name="Chem. Commun. (Camb.)">
        <title>Biosynthesis of violacein: a genuine intermediate, protoviolaceinic acid, produced by VioABDE, and insight into VioC function.</title>
        <authorList>
            <person name="Shinoda K."/>
            <person name="Hasegawa T."/>
            <person name="Sato H."/>
            <person name="Shinozaki M."/>
            <person name="Kuramoto H."/>
            <person name="Takamiya Y."/>
            <person name="Sato T."/>
            <person name="Nikaidou N."/>
            <person name="Watanabe T."/>
            <person name="Hoshino T."/>
        </authorList>
    </citation>
    <scope>FUNCTION</scope>
    <scope>CATALYTIC ACTIVITY</scope>
    <source>
        <strain>ATCC 12472 / DSM 30191 / JCM 1249 / CCUG 213 / NBRC 12614 / NCIMB 9131 / NCTC 9757 / MK</strain>
    </source>
</reference>